<accession>B2RFS9</accession>
<dbReference type="EC" id="2.4.2.19" evidence="7"/>
<dbReference type="EMBL" id="AM922107">
    <property type="protein sequence ID" value="CAP57998.1"/>
    <property type="molecule type" value="Genomic_DNA"/>
</dbReference>
<dbReference type="SMR" id="B2RFS9"/>
<dbReference type="UniPathway" id="UPA00107"/>
<dbReference type="UniPathway" id="UPA00253">
    <property type="reaction ID" value="UER00331"/>
</dbReference>
<dbReference type="GO" id="GO:0005739">
    <property type="term" value="C:mitochondrion"/>
    <property type="evidence" value="ECO:0007669"/>
    <property type="project" value="UniProtKB-SubCell"/>
</dbReference>
<dbReference type="GO" id="GO:0004514">
    <property type="term" value="F:nicotinate-nucleotide diphosphorylase (carboxylating) activity"/>
    <property type="evidence" value="ECO:0007669"/>
    <property type="project" value="UniProtKB-EC"/>
</dbReference>
<dbReference type="GO" id="GO:0009820">
    <property type="term" value="P:alkaloid metabolic process"/>
    <property type="evidence" value="ECO:0007669"/>
    <property type="project" value="UniProtKB-KW"/>
</dbReference>
<dbReference type="GO" id="GO:0009435">
    <property type="term" value="P:NAD biosynthetic process"/>
    <property type="evidence" value="ECO:0007669"/>
    <property type="project" value="UniProtKB-UniPathway"/>
</dbReference>
<dbReference type="GO" id="GO:0042179">
    <property type="term" value="P:nicotine biosynthetic process"/>
    <property type="evidence" value="ECO:0007669"/>
    <property type="project" value="UniProtKB-UniPathway"/>
</dbReference>
<dbReference type="GO" id="GO:0034213">
    <property type="term" value="P:quinolinate catabolic process"/>
    <property type="evidence" value="ECO:0007669"/>
    <property type="project" value="TreeGrafter"/>
</dbReference>
<dbReference type="GO" id="GO:0009611">
    <property type="term" value="P:response to wounding"/>
    <property type="evidence" value="ECO:0000270"/>
    <property type="project" value="UniProtKB"/>
</dbReference>
<dbReference type="CDD" id="cd01572">
    <property type="entry name" value="QPRTase"/>
    <property type="match status" value="1"/>
</dbReference>
<dbReference type="FunFam" id="3.90.1170.20:FF:000001">
    <property type="entry name" value="Nicotinate-nucleotide diphosphorylase (Carboxylating)"/>
    <property type="match status" value="1"/>
</dbReference>
<dbReference type="FunFam" id="3.20.20.70:FF:000149">
    <property type="entry name" value="Nicotinate-nucleotide pyrophosphorylase [carboxylating]"/>
    <property type="match status" value="1"/>
</dbReference>
<dbReference type="Gene3D" id="3.20.20.70">
    <property type="entry name" value="Aldolase class I"/>
    <property type="match status" value="1"/>
</dbReference>
<dbReference type="Gene3D" id="3.90.1170.20">
    <property type="entry name" value="Quinolinate phosphoribosyl transferase, N-terminal domain"/>
    <property type="match status" value="1"/>
</dbReference>
<dbReference type="InterPro" id="IPR013785">
    <property type="entry name" value="Aldolase_TIM"/>
</dbReference>
<dbReference type="InterPro" id="IPR004393">
    <property type="entry name" value="NadC"/>
</dbReference>
<dbReference type="InterPro" id="IPR027277">
    <property type="entry name" value="NadC/ModD"/>
</dbReference>
<dbReference type="InterPro" id="IPR036068">
    <property type="entry name" value="Nicotinate_pribotase-like_C"/>
</dbReference>
<dbReference type="InterPro" id="IPR037128">
    <property type="entry name" value="Quinolinate_PRibosylTase_N_sf"/>
</dbReference>
<dbReference type="InterPro" id="IPR002638">
    <property type="entry name" value="Quinolinate_PRibosylTrfase_C"/>
</dbReference>
<dbReference type="InterPro" id="IPR022412">
    <property type="entry name" value="Quinolinate_PRibosylTrfase_N"/>
</dbReference>
<dbReference type="NCBIfam" id="TIGR00078">
    <property type="entry name" value="nadC"/>
    <property type="match status" value="1"/>
</dbReference>
<dbReference type="PANTHER" id="PTHR32179">
    <property type="entry name" value="NICOTINATE-NUCLEOTIDE PYROPHOSPHORYLASE [CARBOXYLATING]"/>
    <property type="match status" value="1"/>
</dbReference>
<dbReference type="PANTHER" id="PTHR32179:SF3">
    <property type="entry name" value="NICOTINATE-NUCLEOTIDE PYROPHOSPHORYLASE [CARBOXYLATING]"/>
    <property type="match status" value="1"/>
</dbReference>
<dbReference type="Pfam" id="PF01729">
    <property type="entry name" value="QRPTase_C"/>
    <property type="match status" value="1"/>
</dbReference>
<dbReference type="Pfam" id="PF02749">
    <property type="entry name" value="QRPTase_N"/>
    <property type="match status" value="1"/>
</dbReference>
<dbReference type="SUPFAM" id="SSF51690">
    <property type="entry name" value="Nicotinate/Quinolinate PRTase C-terminal domain-like"/>
    <property type="match status" value="1"/>
</dbReference>
<dbReference type="SUPFAM" id="SSF54675">
    <property type="entry name" value="Nicotinate/Quinolinate PRTase N-terminal domain-like"/>
    <property type="match status" value="1"/>
</dbReference>
<name>QPT2_NICGL</name>
<evidence type="ECO:0000250" key="1">
    <source>
        <dbReference type="UniProtKB" id="P9WJJ7"/>
    </source>
</evidence>
<evidence type="ECO:0000255" key="2"/>
<evidence type="ECO:0000269" key="3">
    <source>
    </source>
</evidence>
<evidence type="ECO:0000269" key="4">
    <source>
    </source>
</evidence>
<evidence type="ECO:0000303" key="5">
    <source>
    </source>
</evidence>
<evidence type="ECO:0000305" key="6"/>
<evidence type="ECO:0000305" key="7">
    <source>
    </source>
</evidence>
<proteinExistence type="evidence at protein level"/>
<reference key="1">
    <citation type="journal article" date="2012" name="Plant Sci.">
        <title>Structure and expression of the quinolinate phosphoribosyltransferase (QPT) gene family in Nicotiana.</title>
        <authorList>
            <person name="Ryan S.M."/>
            <person name="Cane K.A."/>
            <person name="DeBoer K.D."/>
            <person name="Sinclair S.J."/>
            <person name="Brimblecombe R."/>
            <person name="Hamill J.D."/>
        </authorList>
    </citation>
    <scope>NUCLEOTIDE SEQUENCE [GENOMIC DNA]</scope>
    <scope>FUNCTION</scope>
    <scope>CATALYTIC ACTIVITY</scope>
    <scope>PATHWAY</scope>
    <source>
        <strain>cv. Melbourne 1</strain>
        <tissue>Leaf</tissue>
    </source>
</reference>
<reference key="2">
    <citation type="journal article" date="2004" name="Funct. Plant Biol.">
        <title>Analysis of wound-induced gene expression in Nicotiana species with contrasting alkaloid profiles.</title>
        <authorList>
            <person name="Sinclair S.J."/>
            <person name="Johnson R."/>
            <person name="Hamill J.D."/>
        </authorList>
    </citation>
    <scope>INDUCTION BY WOUNDING</scope>
</reference>
<reference key="3">
    <citation type="journal article" date="2019" name="Food Chem. Toxicol.">
        <title>Antiparasitic properties of leaf extracts derived from selected Nicotiana species and Nicotiana tabacum varieties.</title>
        <authorList>
            <person name="Schorderet Weber S."/>
            <person name="Kaminski K.P."/>
            <person name="Perret J.-L."/>
            <person name="Leroy P."/>
            <person name="Mazurov A."/>
            <person name="Peitsch M.C."/>
            <person name="Ivanov N.V."/>
            <person name="Hoeng J."/>
        </authorList>
    </citation>
    <scope>FUNCTION</scope>
    <source>
        <strain>cv. Burley Stella</strain>
        <strain>cv. Burley TN90</strain>
        <strain>cv. Virginia ITB 683</strain>
        <strain>cv. Virginia K326</strain>
    </source>
</reference>
<protein>
    <recommendedName>
        <fullName evidence="5">Quinolinate phosphoribosyltransferase [decarboxylating] 2, mitochondrial</fullName>
        <shortName evidence="5">NgQPT2</shortName>
        <ecNumber evidence="7">2.4.2.19</ecNumber>
    </recommendedName>
</protein>
<feature type="transit peptide" description="Mitochondrion" evidence="2">
    <location>
        <begin position="1"/>
        <end status="unknown"/>
    </location>
</feature>
<feature type="chain" id="PRO_0000455792" description="Quinolinate phosphoribosyltransferase [decarboxylating] 2, mitochondrial">
    <location>
        <begin status="unknown"/>
        <end position="351"/>
    </location>
</feature>
<feature type="binding site" evidence="1">
    <location>
        <position position="142"/>
    </location>
    <ligand>
        <name>substrate</name>
    </ligand>
</feature>
<feature type="binding site" evidence="1">
    <location>
        <begin position="173"/>
        <end position="175"/>
    </location>
    <ligand>
        <name>substrate</name>
    </ligand>
</feature>
<feature type="binding site" evidence="1">
    <location>
        <position position="197"/>
    </location>
    <ligand>
        <name>substrate</name>
    </ligand>
</feature>
<feature type="binding site" evidence="1">
    <location>
        <position position="207"/>
    </location>
    <ligand>
        <name>substrate</name>
    </ligand>
</feature>
<feature type="binding site" evidence="1">
    <location>
        <position position="240"/>
    </location>
    <ligand>
        <name>substrate</name>
    </ligand>
</feature>
<feature type="binding site" evidence="1">
    <location>
        <position position="267"/>
    </location>
    <ligand>
        <name>substrate</name>
    </ligand>
</feature>
<feature type="binding site" evidence="1">
    <location>
        <begin position="299"/>
        <end position="301"/>
    </location>
    <ligand>
        <name>substrate</name>
    </ligand>
</feature>
<feature type="binding site" evidence="1">
    <location>
        <begin position="320"/>
        <end position="322"/>
    </location>
    <ligand>
        <name>substrate</name>
    </ligand>
</feature>
<gene>
    <name evidence="5" type="primary">QPT2</name>
</gene>
<comment type="function">
    <text evidence="3 7">Involved in the biosynthesis of pyridine alkaloid natural products, leading mainly to the production of anabasine, anatabine, nicotine and nornicotine, effective deterrents against herbivores with antiparasitic and pesticide properties (neurotoxins); nornicotine serves as the precursor in the synthesis of the carcinogen compound N'-nitrosonornicotine (NNN) (Probable) (PubMed:31276744). Involved in the catabolism of quinolinic acid (QA) (Probable).</text>
</comment>
<comment type="catalytic activity">
    <reaction evidence="7">
        <text>nicotinate beta-D-ribonucleotide + CO2 + diphosphate = quinolinate + 5-phospho-alpha-D-ribose 1-diphosphate + 2 H(+)</text>
        <dbReference type="Rhea" id="RHEA:12733"/>
        <dbReference type="ChEBI" id="CHEBI:15378"/>
        <dbReference type="ChEBI" id="CHEBI:16526"/>
        <dbReference type="ChEBI" id="CHEBI:29959"/>
        <dbReference type="ChEBI" id="CHEBI:33019"/>
        <dbReference type="ChEBI" id="CHEBI:57502"/>
        <dbReference type="ChEBI" id="CHEBI:58017"/>
        <dbReference type="EC" id="2.4.2.19"/>
    </reaction>
    <physiologicalReaction direction="right-to-left" evidence="7">
        <dbReference type="Rhea" id="RHEA:12735"/>
    </physiologicalReaction>
</comment>
<comment type="pathway">
    <text evidence="7">Alkaloid biosynthesis; nicotine biosynthesis.</text>
</comment>
<comment type="pathway">
    <text evidence="7">Cofactor biosynthesis; NAD(+) biosynthesis; nicotinate D-ribonucleotide from quinolinate: step 1/1.</text>
</comment>
<comment type="subcellular location">
    <subcellularLocation>
        <location evidence="2">Mitochondrion</location>
    </subcellularLocation>
</comment>
<comment type="induction">
    <text evidence="4">Induced by wounding.</text>
</comment>
<comment type="similarity">
    <text evidence="6">Belongs to the NadC/ModD family.</text>
</comment>
<organism>
    <name type="scientific">Nicotiana glauca</name>
    <name type="common">Glaucous tobacco</name>
    <name type="synonym">Tree tobacco</name>
    <dbReference type="NCBI Taxonomy" id="4090"/>
    <lineage>
        <taxon>Eukaryota</taxon>
        <taxon>Viridiplantae</taxon>
        <taxon>Streptophyta</taxon>
        <taxon>Embryophyta</taxon>
        <taxon>Tracheophyta</taxon>
        <taxon>Spermatophyta</taxon>
        <taxon>Magnoliopsida</taxon>
        <taxon>eudicotyledons</taxon>
        <taxon>Gunneridae</taxon>
        <taxon>Pentapetalae</taxon>
        <taxon>asterids</taxon>
        <taxon>lamiids</taxon>
        <taxon>Solanales</taxon>
        <taxon>Solanaceae</taxon>
        <taxon>Nicotianoideae</taxon>
        <taxon>Nicotianeae</taxon>
        <taxon>Nicotiana</taxon>
    </lineage>
</organism>
<sequence length="351" mass="38330">MFRAIPFTATVHPYAITAPRLVVKMSAIATKNTRVESLEVKPPAHPTYDLKEVMQLALSEDAGNLGDVTCKATIPLDMESDAHFLAKEDGIVAGIALAEMIFAEVDPSLKVEWYVNDGDKVHKGLKFGKVQGNAYNIVIAERVVLNFMQRMSGIATLTKEMADAAHPAYILETRKTAPGLRLVDKWAVLIGGGKNHRMGLFDMVMIKDNHISAAGGVGKALKSVDQYLEQNKLQIGVEVETRTIEEVREVLEYASQTKTSLTRIMLDNMVVPLSNGDIDVSMLKEAVELINGRFDTEASGNVTLETVHKIGQTGVTYISSGALTHSVKALDISLKIDTELALEVGRRTKRA</sequence>
<keyword id="KW-0017">Alkaloid metabolism</keyword>
<keyword id="KW-0328">Glycosyltransferase</keyword>
<keyword id="KW-0496">Mitochondrion</keyword>
<keyword id="KW-0662">Pyridine nucleotide biosynthesis</keyword>
<keyword id="KW-0808">Transferase</keyword>
<keyword id="KW-0809">Transit peptide</keyword>